<accession>B1XKZ0</accession>
<keyword id="KW-0963">Cytoplasm</keyword>
<keyword id="KW-0489">Methyltransferase</keyword>
<keyword id="KW-1185">Reference proteome</keyword>
<keyword id="KW-0949">S-adenosyl-L-methionine</keyword>
<keyword id="KW-0808">Transferase</keyword>
<feature type="chain" id="PRO_1000132836" description="Ribosomal protein L11 methyltransferase">
    <location>
        <begin position="1"/>
        <end position="296"/>
    </location>
</feature>
<feature type="binding site" evidence="1">
    <location>
        <position position="139"/>
    </location>
    <ligand>
        <name>S-adenosyl-L-methionine</name>
        <dbReference type="ChEBI" id="CHEBI:59789"/>
    </ligand>
</feature>
<feature type="binding site" evidence="1">
    <location>
        <position position="163"/>
    </location>
    <ligand>
        <name>S-adenosyl-L-methionine</name>
        <dbReference type="ChEBI" id="CHEBI:59789"/>
    </ligand>
</feature>
<feature type="binding site" evidence="1">
    <location>
        <position position="185"/>
    </location>
    <ligand>
        <name>S-adenosyl-L-methionine</name>
        <dbReference type="ChEBI" id="CHEBI:59789"/>
    </ligand>
</feature>
<feature type="binding site" evidence="1">
    <location>
        <position position="232"/>
    </location>
    <ligand>
        <name>S-adenosyl-L-methionine</name>
        <dbReference type="ChEBI" id="CHEBI:59789"/>
    </ligand>
</feature>
<comment type="function">
    <text evidence="1">Methylates ribosomal protein L11.</text>
</comment>
<comment type="catalytic activity">
    <reaction evidence="1">
        <text>L-lysyl-[protein] + 3 S-adenosyl-L-methionine = N(6),N(6),N(6)-trimethyl-L-lysyl-[protein] + 3 S-adenosyl-L-homocysteine + 3 H(+)</text>
        <dbReference type="Rhea" id="RHEA:54192"/>
        <dbReference type="Rhea" id="RHEA-COMP:9752"/>
        <dbReference type="Rhea" id="RHEA-COMP:13826"/>
        <dbReference type="ChEBI" id="CHEBI:15378"/>
        <dbReference type="ChEBI" id="CHEBI:29969"/>
        <dbReference type="ChEBI" id="CHEBI:57856"/>
        <dbReference type="ChEBI" id="CHEBI:59789"/>
        <dbReference type="ChEBI" id="CHEBI:61961"/>
    </reaction>
</comment>
<comment type="subcellular location">
    <subcellularLocation>
        <location evidence="1">Cytoplasm</location>
    </subcellularLocation>
</comment>
<comment type="similarity">
    <text evidence="1">Belongs to the methyltransferase superfamily. PrmA family.</text>
</comment>
<protein>
    <recommendedName>
        <fullName evidence="1">Ribosomal protein L11 methyltransferase</fullName>
        <shortName evidence="1">L11 Mtase</shortName>
        <ecNumber evidence="1">2.1.1.-</ecNumber>
    </recommendedName>
</protein>
<proteinExistence type="inferred from homology"/>
<name>PRMA_PICP2</name>
<evidence type="ECO:0000255" key="1">
    <source>
        <dbReference type="HAMAP-Rule" id="MF_00735"/>
    </source>
</evidence>
<sequence length="296" mass="33086">MTTTWWELQILCDPSLEETIFWRLDDFGCRGMAGEQKGQSYLIRAYSPQAEFDHLDLAALALLLKQDAVLAHLPKPVVKWHLIDEEDWSSSWKSHWQPEEIGDRLLIYPAWLEVPTHSERLLLRLDPGSAFGTGAHQTTQLCLEALEMRLGQQPETQVIADIGCGSGILSIGSLLLGAKQTFGVDTDILAVTASNSNRALNNIEPERMVVAQGSIDTLPKMYPEPFDGIVCNILAEIIIELIPKMSAIAKPDTWGILSGILIEQIQPIADTLEQNGWAIAALWKKDEWCCFNIRRN</sequence>
<gene>
    <name evidence="1" type="primary">prmA</name>
    <name type="ordered locus">SYNPCC7002_A1247</name>
</gene>
<organism>
    <name type="scientific">Picosynechococcus sp. (strain ATCC 27264 / PCC 7002 / PR-6)</name>
    <name type="common">Agmenellum quadruplicatum</name>
    <dbReference type="NCBI Taxonomy" id="32049"/>
    <lineage>
        <taxon>Bacteria</taxon>
        <taxon>Bacillati</taxon>
        <taxon>Cyanobacteriota</taxon>
        <taxon>Cyanophyceae</taxon>
        <taxon>Oscillatoriophycideae</taxon>
        <taxon>Chroococcales</taxon>
        <taxon>Geminocystaceae</taxon>
        <taxon>Picosynechococcus</taxon>
    </lineage>
</organism>
<dbReference type="EC" id="2.1.1.-" evidence="1"/>
<dbReference type="EMBL" id="CP000951">
    <property type="protein sequence ID" value="ACA99245.1"/>
    <property type="molecule type" value="Genomic_DNA"/>
</dbReference>
<dbReference type="RefSeq" id="WP_012306868.1">
    <property type="nucleotide sequence ID" value="NZ_JAHHPU010000001.1"/>
</dbReference>
<dbReference type="SMR" id="B1XKZ0"/>
<dbReference type="STRING" id="32049.SYNPCC7002_A1247"/>
<dbReference type="KEGG" id="syp:SYNPCC7002_A1247"/>
<dbReference type="eggNOG" id="COG2264">
    <property type="taxonomic scope" value="Bacteria"/>
</dbReference>
<dbReference type="HOGENOM" id="CLU_049382_0_1_3"/>
<dbReference type="Proteomes" id="UP000001688">
    <property type="component" value="Chromosome"/>
</dbReference>
<dbReference type="GO" id="GO:0005737">
    <property type="term" value="C:cytoplasm"/>
    <property type="evidence" value="ECO:0007669"/>
    <property type="project" value="UniProtKB-SubCell"/>
</dbReference>
<dbReference type="GO" id="GO:0016279">
    <property type="term" value="F:protein-lysine N-methyltransferase activity"/>
    <property type="evidence" value="ECO:0007669"/>
    <property type="project" value="RHEA"/>
</dbReference>
<dbReference type="GO" id="GO:0032259">
    <property type="term" value="P:methylation"/>
    <property type="evidence" value="ECO:0007669"/>
    <property type="project" value="UniProtKB-KW"/>
</dbReference>
<dbReference type="CDD" id="cd02440">
    <property type="entry name" value="AdoMet_MTases"/>
    <property type="match status" value="1"/>
</dbReference>
<dbReference type="Gene3D" id="3.40.50.150">
    <property type="entry name" value="Vaccinia Virus protein VP39"/>
    <property type="match status" value="1"/>
</dbReference>
<dbReference type="HAMAP" id="MF_00735">
    <property type="entry name" value="Methyltr_PrmA"/>
    <property type="match status" value="1"/>
</dbReference>
<dbReference type="InterPro" id="IPR050078">
    <property type="entry name" value="Ribosomal_L11_MeTrfase_PrmA"/>
</dbReference>
<dbReference type="InterPro" id="IPR004498">
    <property type="entry name" value="Ribosomal_PrmA_MeTrfase"/>
</dbReference>
<dbReference type="InterPro" id="IPR029063">
    <property type="entry name" value="SAM-dependent_MTases_sf"/>
</dbReference>
<dbReference type="NCBIfam" id="TIGR00406">
    <property type="entry name" value="prmA"/>
    <property type="match status" value="1"/>
</dbReference>
<dbReference type="PANTHER" id="PTHR43648">
    <property type="entry name" value="ELECTRON TRANSFER FLAVOPROTEIN BETA SUBUNIT LYSINE METHYLTRANSFERASE"/>
    <property type="match status" value="1"/>
</dbReference>
<dbReference type="PANTHER" id="PTHR43648:SF1">
    <property type="entry name" value="ELECTRON TRANSFER FLAVOPROTEIN BETA SUBUNIT LYSINE METHYLTRANSFERASE"/>
    <property type="match status" value="1"/>
</dbReference>
<dbReference type="Pfam" id="PF06325">
    <property type="entry name" value="PrmA"/>
    <property type="match status" value="1"/>
</dbReference>
<dbReference type="PIRSF" id="PIRSF000401">
    <property type="entry name" value="RPL11_MTase"/>
    <property type="match status" value="1"/>
</dbReference>
<dbReference type="SUPFAM" id="SSF53335">
    <property type="entry name" value="S-adenosyl-L-methionine-dependent methyltransferases"/>
    <property type="match status" value="1"/>
</dbReference>
<reference key="1">
    <citation type="submission" date="2008-02" db="EMBL/GenBank/DDBJ databases">
        <title>Complete sequence of Synechococcus sp. PCC 7002.</title>
        <authorList>
            <person name="Li T."/>
            <person name="Zhao J."/>
            <person name="Zhao C."/>
            <person name="Liu Z."/>
            <person name="Zhao F."/>
            <person name="Marquardt J."/>
            <person name="Nomura C.T."/>
            <person name="Persson S."/>
            <person name="Detter J.C."/>
            <person name="Richardson P.M."/>
            <person name="Lanz C."/>
            <person name="Schuster S.C."/>
            <person name="Wang J."/>
            <person name="Li S."/>
            <person name="Huang X."/>
            <person name="Cai T."/>
            <person name="Yu Z."/>
            <person name="Luo J."/>
            <person name="Zhao J."/>
            <person name="Bryant D.A."/>
        </authorList>
    </citation>
    <scope>NUCLEOTIDE SEQUENCE [LARGE SCALE GENOMIC DNA]</scope>
    <source>
        <strain>ATCC 27264 / PCC 7002 / PR-6</strain>
    </source>
</reference>